<gene>
    <name evidence="1" type="primary">rpoA</name>
    <name type="ordered locus">TM_1472</name>
</gene>
<proteinExistence type="inferred from homology"/>
<organism>
    <name type="scientific">Thermotoga maritima (strain ATCC 43589 / DSM 3109 / JCM 10099 / NBRC 100826 / MSB8)</name>
    <dbReference type="NCBI Taxonomy" id="243274"/>
    <lineage>
        <taxon>Bacteria</taxon>
        <taxon>Thermotogati</taxon>
        <taxon>Thermotogota</taxon>
        <taxon>Thermotogae</taxon>
        <taxon>Thermotogales</taxon>
        <taxon>Thermotogaceae</taxon>
        <taxon>Thermotoga</taxon>
    </lineage>
</organism>
<sequence>MIEFVIPKKLKVEEEREERDYYYSRFSLSPLERGYAITIGNALRRVLLSSIPSLAIVGVRFIKPEKYHEYDYIEGVKEDILDIILNLKKVQFRINVTVKGTIKMEVEKKGPGELVAGDIKTPAGIEVVNPDLHIATLNSKADLFFEVYAEVGKGFVPVSEREERPDVGWIPIDGVFSPVIKVNFLTENVRVGKRTDYDKLILEIWTKKSIRPEEALRKAADILINHFKIVTEGLPELKISEEYIITSEEEEAEVPASEHEEEHRENSDVYNRKIDELELSVRSLNCLKRAKIETIGDLLSKTEEELLKIKNFGQKSLDEVKEKLKEKFGLELRKGE</sequence>
<protein>
    <recommendedName>
        <fullName evidence="1">DNA-directed RNA polymerase subunit alpha</fullName>
        <shortName evidence="1">RNAP subunit alpha</shortName>
        <ecNumber evidence="1">2.7.7.6</ecNumber>
    </recommendedName>
    <alternativeName>
        <fullName evidence="1">RNA polymerase subunit alpha</fullName>
    </alternativeName>
    <alternativeName>
        <fullName evidence="1">Transcriptase subunit alpha</fullName>
    </alternativeName>
</protein>
<feature type="chain" id="PRO_0000175406" description="DNA-directed RNA polymerase subunit alpha">
    <location>
        <begin position="1"/>
        <end position="336"/>
    </location>
</feature>
<feature type="region of interest" description="Alpha N-terminal domain (alpha-NTD)" evidence="1">
    <location>
        <begin position="1"/>
        <end position="235"/>
    </location>
</feature>
<feature type="region of interest" description="Alpha C-terminal domain (alpha-CTD)" evidence="1">
    <location>
        <begin position="264"/>
        <end position="336"/>
    </location>
</feature>
<accession>Q9X1I2</accession>
<evidence type="ECO:0000255" key="1">
    <source>
        <dbReference type="HAMAP-Rule" id="MF_00059"/>
    </source>
</evidence>
<comment type="function">
    <text evidence="1">DNA-dependent RNA polymerase catalyzes the transcription of DNA into RNA using the four ribonucleoside triphosphates as substrates.</text>
</comment>
<comment type="catalytic activity">
    <reaction evidence="1">
        <text>RNA(n) + a ribonucleoside 5'-triphosphate = RNA(n+1) + diphosphate</text>
        <dbReference type="Rhea" id="RHEA:21248"/>
        <dbReference type="Rhea" id="RHEA-COMP:14527"/>
        <dbReference type="Rhea" id="RHEA-COMP:17342"/>
        <dbReference type="ChEBI" id="CHEBI:33019"/>
        <dbReference type="ChEBI" id="CHEBI:61557"/>
        <dbReference type="ChEBI" id="CHEBI:140395"/>
        <dbReference type="EC" id="2.7.7.6"/>
    </reaction>
</comment>
<comment type="subunit">
    <text evidence="1">Homodimer. The RNAP catalytic core consists of 2 alpha, 1 beta, 1 beta' and 1 omega subunit. When a sigma factor is associated with the core the holoenzyme is formed, which can initiate transcription.</text>
</comment>
<comment type="domain">
    <text evidence="1">The N-terminal domain is essential for RNAP assembly and basal transcription, whereas the C-terminal domain is involved in interaction with transcriptional regulators and with upstream promoter elements.</text>
</comment>
<comment type="similarity">
    <text evidence="1">Belongs to the RNA polymerase alpha chain family.</text>
</comment>
<reference key="1">
    <citation type="journal article" date="1999" name="Nature">
        <title>Evidence for lateral gene transfer between Archaea and Bacteria from genome sequence of Thermotoga maritima.</title>
        <authorList>
            <person name="Nelson K.E."/>
            <person name="Clayton R.A."/>
            <person name="Gill S.R."/>
            <person name="Gwinn M.L."/>
            <person name="Dodson R.J."/>
            <person name="Haft D.H."/>
            <person name="Hickey E.K."/>
            <person name="Peterson J.D."/>
            <person name="Nelson W.C."/>
            <person name="Ketchum K.A."/>
            <person name="McDonald L.A."/>
            <person name="Utterback T.R."/>
            <person name="Malek J.A."/>
            <person name="Linher K.D."/>
            <person name="Garrett M.M."/>
            <person name="Stewart A.M."/>
            <person name="Cotton M.D."/>
            <person name="Pratt M.S."/>
            <person name="Phillips C.A."/>
            <person name="Richardson D.L."/>
            <person name="Heidelberg J.F."/>
            <person name="Sutton G.G."/>
            <person name="Fleischmann R.D."/>
            <person name="Eisen J.A."/>
            <person name="White O."/>
            <person name="Salzberg S.L."/>
            <person name="Smith H.O."/>
            <person name="Venter J.C."/>
            <person name="Fraser C.M."/>
        </authorList>
    </citation>
    <scope>NUCLEOTIDE SEQUENCE [LARGE SCALE GENOMIC DNA]</scope>
    <source>
        <strain>ATCC 43589 / DSM 3109 / JCM 10099 / NBRC 100826 / MSB8</strain>
    </source>
</reference>
<keyword id="KW-0240">DNA-directed RNA polymerase</keyword>
<keyword id="KW-0548">Nucleotidyltransferase</keyword>
<keyword id="KW-1185">Reference proteome</keyword>
<keyword id="KW-0804">Transcription</keyword>
<keyword id="KW-0808">Transferase</keyword>
<dbReference type="EC" id="2.7.7.6" evidence="1"/>
<dbReference type="EMBL" id="AE000512">
    <property type="protein sequence ID" value="AAD36540.1"/>
    <property type="molecule type" value="Genomic_DNA"/>
</dbReference>
<dbReference type="PIR" id="A72247">
    <property type="entry name" value="A72247"/>
</dbReference>
<dbReference type="RefSeq" id="NP_229272.1">
    <property type="nucleotide sequence ID" value="NC_000853.1"/>
</dbReference>
<dbReference type="RefSeq" id="WP_004081779.1">
    <property type="nucleotide sequence ID" value="NC_000853.1"/>
</dbReference>
<dbReference type="SMR" id="Q9X1I2"/>
<dbReference type="FunCoup" id="Q9X1I2">
    <property type="interactions" value="340"/>
</dbReference>
<dbReference type="STRING" id="243274.TM_1472"/>
<dbReference type="PaxDb" id="243274-THEMA_06940"/>
<dbReference type="EnsemblBacteria" id="AAD36540">
    <property type="protein sequence ID" value="AAD36540"/>
    <property type="gene ID" value="TM_1472"/>
</dbReference>
<dbReference type="KEGG" id="tma:TM1472"/>
<dbReference type="KEGG" id="tmi:THEMA_06940"/>
<dbReference type="KEGG" id="tmm:Tmari_1480"/>
<dbReference type="KEGG" id="tmw:THMA_1504"/>
<dbReference type="eggNOG" id="COG0202">
    <property type="taxonomic scope" value="Bacteria"/>
</dbReference>
<dbReference type="InParanoid" id="Q9X1I2"/>
<dbReference type="OrthoDB" id="9805706at2"/>
<dbReference type="Proteomes" id="UP000008183">
    <property type="component" value="Chromosome"/>
</dbReference>
<dbReference type="GO" id="GO:0005737">
    <property type="term" value="C:cytoplasm"/>
    <property type="evidence" value="ECO:0000318"/>
    <property type="project" value="GO_Central"/>
</dbReference>
<dbReference type="GO" id="GO:0000428">
    <property type="term" value="C:DNA-directed RNA polymerase complex"/>
    <property type="evidence" value="ECO:0007669"/>
    <property type="project" value="UniProtKB-KW"/>
</dbReference>
<dbReference type="GO" id="GO:0003677">
    <property type="term" value="F:DNA binding"/>
    <property type="evidence" value="ECO:0007669"/>
    <property type="project" value="UniProtKB-UniRule"/>
</dbReference>
<dbReference type="GO" id="GO:0003899">
    <property type="term" value="F:DNA-directed RNA polymerase activity"/>
    <property type="evidence" value="ECO:0007669"/>
    <property type="project" value="UniProtKB-UniRule"/>
</dbReference>
<dbReference type="GO" id="GO:0046983">
    <property type="term" value="F:protein dimerization activity"/>
    <property type="evidence" value="ECO:0007669"/>
    <property type="project" value="InterPro"/>
</dbReference>
<dbReference type="GO" id="GO:0006351">
    <property type="term" value="P:DNA-templated transcription"/>
    <property type="evidence" value="ECO:0007669"/>
    <property type="project" value="UniProtKB-UniRule"/>
</dbReference>
<dbReference type="CDD" id="cd06928">
    <property type="entry name" value="RNAP_alpha_NTD"/>
    <property type="match status" value="1"/>
</dbReference>
<dbReference type="FunFam" id="2.170.120.12:FF:000001">
    <property type="entry name" value="DNA-directed RNA polymerase subunit alpha"/>
    <property type="match status" value="1"/>
</dbReference>
<dbReference type="Gene3D" id="1.10.150.20">
    <property type="entry name" value="5' to 3' exonuclease, C-terminal subdomain"/>
    <property type="match status" value="1"/>
</dbReference>
<dbReference type="Gene3D" id="2.170.120.12">
    <property type="entry name" value="DNA-directed RNA polymerase, insert domain"/>
    <property type="match status" value="1"/>
</dbReference>
<dbReference type="Gene3D" id="3.30.1360.10">
    <property type="entry name" value="RNA polymerase, RBP11-like subunit"/>
    <property type="match status" value="1"/>
</dbReference>
<dbReference type="HAMAP" id="MF_00059">
    <property type="entry name" value="RNApol_bact_RpoA"/>
    <property type="match status" value="1"/>
</dbReference>
<dbReference type="InterPro" id="IPR011262">
    <property type="entry name" value="DNA-dir_RNA_pol_insert"/>
</dbReference>
<dbReference type="InterPro" id="IPR011263">
    <property type="entry name" value="DNA-dir_RNA_pol_RpoA/D/Rpb3"/>
</dbReference>
<dbReference type="InterPro" id="IPR011773">
    <property type="entry name" value="DNA-dir_RpoA"/>
</dbReference>
<dbReference type="InterPro" id="IPR036603">
    <property type="entry name" value="RBP11-like"/>
</dbReference>
<dbReference type="InterPro" id="IPR011260">
    <property type="entry name" value="RNAP_asu_C"/>
</dbReference>
<dbReference type="InterPro" id="IPR036643">
    <property type="entry name" value="RNApol_insert_sf"/>
</dbReference>
<dbReference type="NCBIfam" id="NF003513">
    <property type="entry name" value="PRK05182.1-2"/>
    <property type="match status" value="1"/>
</dbReference>
<dbReference type="NCBIfam" id="NF003519">
    <property type="entry name" value="PRK05182.2-5"/>
    <property type="match status" value="1"/>
</dbReference>
<dbReference type="NCBIfam" id="TIGR02027">
    <property type="entry name" value="rpoA"/>
    <property type="match status" value="1"/>
</dbReference>
<dbReference type="Pfam" id="PF01000">
    <property type="entry name" value="RNA_pol_A_bac"/>
    <property type="match status" value="1"/>
</dbReference>
<dbReference type="Pfam" id="PF03118">
    <property type="entry name" value="RNA_pol_A_CTD"/>
    <property type="match status" value="1"/>
</dbReference>
<dbReference type="Pfam" id="PF01193">
    <property type="entry name" value="RNA_pol_L"/>
    <property type="match status" value="1"/>
</dbReference>
<dbReference type="SMART" id="SM00662">
    <property type="entry name" value="RPOLD"/>
    <property type="match status" value="1"/>
</dbReference>
<dbReference type="SUPFAM" id="SSF47789">
    <property type="entry name" value="C-terminal domain of RNA polymerase alpha subunit"/>
    <property type="match status" value="1"/>
</dbReference>
<dbReference type="SUPFAM" id="SSF56553">
    <property type="entry name" value="Insert subdomain of RNA polymerase alpha subunit"/>
    <property type="match status" value="1"/>
</dbReference>
<dbReference type="SUPFAM" id="SSF55257">
    <property type="entry name" value="RBP11-like subunits of RNA polymerase"/>
    <property type="match status" value="1"/>
</dbReference>
<name>RPOA_THEMA</name>